<gene>
    <name evidence="1" type="primary">queF</name>
    <name type="ordered locus">Cpha266_0561</name>
</gene>
<name>QUEF_CHLPD</name>
<organism>
    <name type="scientific">Chlorobium phaeobacteroides (strain DSM 266 / SMG 266 / 2430)</name>
    <dbReference type="NCBI Taxonomy" id="290317"/>
    <lineage>
        <taxon>Bacteria</taxon>
        <taxon>Pseudomonadati</taxon>
        <taxon>Chlorobiota</taxon>
        <taxon>Chlorobiia</taxon>
        <taxon>Chlorobiales</taxon>
        <taxon>Chlorobiaceae</taxon>
        <taxon>Chlorobium/Pelodictyon group</taxon>
        <taxon>Chlorobium</taxon>
    </lineage>
</organism>
<evidence type="ECO:0000255" key="1">
    <source>
        <dbReference type="HAMAP-Rule" id="MF_00818"/>
    </source>
</evidence>
<comment type="function">
    <text evidence="1">Catalyzes the NADPH-dependent reduction of 7-cyano-7-deazaguanine (preQ0) to 7-aminomethyl-7-deazaguanine (preQ1).</text>
</comment>
<comment type="catalytic activity">
    <reaction evidence="1">
        <text>7-aminomethyl-7-carbaguanine + 2 NADP(+) = 7-cyano-7-deazaguanine + 2 NADPH + 3 H(+)</text>
        <dbReference type="Rhea" id="RHEA:13409"/>
        <dbReference type="ChEBI" id="CHEBI:15378"/>
        <dbReference type="ChEBI" id="CHEBI:45075"/>
        <dbReference type="ChEBI" id="CHEBI:57783"/>
        <dbReference type="ChEBI" id="CHEBI:58349"/>
        <dbReference type="ChEBI" id="CHEBI:58703"/>
        <dbReference type="EC" id="1.7.1.13"/>
    </reaction>
</comment>
<comment type="pathway">
    <text evidence="1">tRNA modification; tRNA-queuosine biosynthesis.</text>
</comment>
<comment type="subcellular location">
    <subcellularLocation>
        <location evidence="1">Cytoplasm</location>
    </subcellularLocation>
</comment>
<comment type="similarity">
    <text evidence="1">Belongs to the GTP cyclohydrolase I family. QueF type 1 subfamily.</text>
</comment>
<proteinExistence type="inferred from homology"/>
<feature type="chain" id="PRO_1000062382" description="NADPH-dependent 7-cyano-7-deazaguanine reductase">
    <location>
        <begin position="1"/>
        <end position="116"/>
    </location>
</feature>
<feature type="active site" description="Thioimide intermediate" evidence="1">
    <location>
        <position position="31"/>
    </location>
</feature>
<feature type="active site" description="Proton donor" evidence="1">
    <location>
        <position position="38"/>
    </location>
</feature>
<feature type="binding site" evidence="1">
    <location>
        <begin position="53"/>
        <end position="55"/>
    </location>
    <ligand>
        <name>substrate</name>
    </ligand>
</feature>
<feature type="binding site" evidence="1">
    <location>
        <begin position="72"/>
        <end position="73"/>
    </location>
    <ligand>
        <name>substrate</name>
    </ligand>
</feature>
<accession>A1BDZ0</accession>
<sequence length="116" mass="13416">MKKEILEVFDNTFPGRDYTIEIVNPEFTSVCPITALPDFGTIIIRYIPDKSCVELKSLKYYFLEFRNAGIFYENITNTILDDLTSVLQPREMTVITQWKARGGITETVSVTWPQKQ</sequence>
<dbReference type="EC" id="1.7.1.13" evidence="1"/>
<dbReference type="EMBL" id="CP000492">
    <property type="protein sequence ID" value="ABL64617.1"/>
    <property type="molecule type" value="Genomic_DNA"/>
</dbReference>
<dbReference type="RefSeq" id="WP_011744450.1">
    <property type="nucleotide sequence ID" value="NC_008639.1"/>
</dbReference>
<dbReference type="SMR" id="A1BDZ0"/>
<dbReference type="STRING" id="290317.Cpha266_0561"/>
<dbReference type="KEGG" id="cph:Cpha266_0561"/>
<dbReference type="eggNOG" id="COG0780">
    <property type="taxonomic scope" value="Bacteria"/>
</dbReference>
<dbReference type="HOGENOM" id="CLU_102489_1_2_10"/>
<dbReference type="OrthoDB" id="9795077at2"/>
<dbReference type="UniPathway" id="UPA00392"/>
<dbReference type="Proteomes" id="UP000008701">
    <property type="component" value="Chromosome"/>
</dbReference>
<dbReference type="GO" id="GO:0005737">
    <property type="term" value="C:cytoplasm"/>
    <property type="evidence" value="ECO:0007669"/>
    <property type="project" value="UniProtKB-SubCell"/>
</dbReference>
<dbReference type="GO" id="GO:0033739">
    <property type="term" value="F:preQ1 synthase activity"/>
    <property type="evidence" value="ECO:0007669"/>
    <property type="project" value="UniProtKB-UniRule"/>
</dbReference>
<dbReference type="GO" id="GO:0008616">
    <property type="term" value="P:queuosine biosynthetic process"/>
    <property type="evidence" value="ECO:0007669"/>
    <property type="project" value="UniProtKB-UniRule"/>
</dbReference>
<dbReference type="GO" id="GO:0006400">
    <property type="term" value="P:tRNA modification"/>
    <property type="evidence" value="ECO:0007669"/>
    <property type="project" value="UniProtKB-UniRule"/>
</dbReference>
<dbReference type="Gene3D" id="3.30.1130.10">
    <property type="match status" value="1"/>
</dbReference>
<dbReference type="HAMAP" id="MF_00818">
    <property type="entry name" value="QueF_type1"/>
    <property type="match status" value="1"/>
</dbReference>
<dbReference type="InterPro" id="IPR043133">
    <property type="entry name" value="GTP-CH-I_C/QueF"/>
</dbReference>
<dbReference type="InterPro" id="IPR050084">
    <property type="entry name" value="NADPH_dep_7-cyano-7-deazaG_red"/>
</dbReference>
<dbReference type="InterPro" id="IPR029500">
    <property type="entry name" value="QueF"/>
</dbReference>
<dbReference type="InterPro" id="IPR016856">
    <property type="entry name" value="QueF_type1"/>
</dbReference>
<dbReference type="NCBIfam" id="TIGR03139">
    <property type="entry name" value="QueF-II"/>
    <property type="match status" value="1"/>
</dbReference>
<dbReference type="PANTHER" id="PTHR34354">
    <property type="entry name" value="NADPH-DEPENDENT 7-CYANO-7-DEAZAGUANINE REDUCTASE"/>
    <property type="match status" value="1"/>
</dbReference>
<dbReference type="PANTHER" id="PTHR34354:SF1">
    <property type="entry name" value="NADPH-DEPENDENT 7-CYANO-7-DEAZAGUANINE REDUCTASE"/>
    <property type="match status" value="1"/>
</dbReference>
<dbReference type="Pfam" id="PF14489">
    <property type="entry name" value="QueF"/>
    <property type="match status" value="1"/>
</dbReference>
<dbReference type="PIRSF" id="PIRSF027377">
    <property type="entry name" value="Nitrile_oxidored_QueF"/>
    <property type="match status" value="1"/>
</dbReference>
<dbReference type="SUPFAM" id="SSF55620">
    <property type="entry name" value="Tetrahydrobiopterin biosynthesis enzymes-like"/>
    <property type="match status" value="1"/>
</dbReference>
<protein>
    <recommendedName>
        <fullName evidence="1">NADPH-dependent 7-cyano-7-deazaguanine reductase</fullName>
        <ecNumber evidence="1">1.7.1.13</ecNumber>
    </recommendedName>
    <alternativeName>
        <fullName evidence="1">7-cyano-7-carbaguanine reductase</fullName>
    </alternativeName>
    <alternativeName>
        <fullName evidence="1">NADPH-dependent nitrile oxidoreductase</fullName>
    </alternativeName>
    <alternativeName>
        <fullName evidence="1">PreQ(0) reductase</fullName>
    </alternativeName>
</protein>
<keyword id="KW-0963">Cytoplasm</keyword>
<keyword id="KW-0521">NADP</keyword>
<keyword id="KW-0560">Oxidoreductase</keyword>
<keyword id="KW-0671">Queuosine biosynthesis</keyword>
<keyword id="KW-1185">Reference proteome</keyword>
<reference key="1">
    <citation type="submission" date="2006-12" db="EMBL/GenBank/DDBJ databases">
        <title>Complete sequence of Chlorobium phaeobacteroides DSM 266.</title>
        <authorList>
            <consortium name="US DOE Joint Genome Institute"/>
            <person name="Copeland A."/>
            <person name="Lucas S."/>
            <person name="Lapidus A."/>
            <person name="Barry K."/>
            <person name="Detter J.C."/>
            <person name="Glavina del Rio T."/>
            <person name="Hammon N."/>
            <person name="Israni S."/>
            <person name="Pitluck S."/>
            <person name="Goltsman E."/>
            <person name="Schmutz J."/>
            <person name="Larimer F."/>
            <person name="Land M."/>
            <person name="Hauser L."/>
            <person name="Mikhailova N."/>
            <person name="Li T."/>
            <person name="Overmann J."/>
            <person name="Bryant D.A."/>
            <person name="Richardson P."/>
        </authorList>
    </citation>
    <scope>NUCLEOTIDE SEQUENCE [LARGE SCALE GENOMIC DNA]</scope>
    <source>
        <strain>DSM 266 / SMG 266 / 2430</strain>
    </source>
</reference>